<comment type="function">
    <text evidence="1">Formation of pseudouridine at positions 38, 39 and 40 in the anticodon stem and loop of transfer RNAs.</text>
</comment>
<comment type="catalytic activity">
    <reaction evidence="1">
        <text>uridine(38/39/40) in tRNA = pseudouridine(38/39/40) in tRNA</text>
        <dbReference type="Rhea" id="RHEA:22376"/>
        <dbReference type="Rhea" id="RHEA-COMP:10085"/>
        <dbReference type="Rhea" id="RHEA-COMP:10087"/>
        <dbReference type="ChEBI" id="CHEBI:65314"/>
        <dbReference type="ChEBI" id="CHEBI:65315"/>
        <dbReference type="EC" id="5.4.99.12"/>
    </reaction>
</comment>
<comment type="subunit">
    <text evidence="1">Homodimer.</text>
</comment>
<comment type="similarity">
    <text evidence="1">Belongs to the tRNA pseudouridine synthase TruA family.</text>
</comment>
<evidence type="ECO:0000255" key="1">
    <source>
        <dbReference type="HAMAP-Rule" id="MF_00171"/>
    </source>
</evidence>
<proteinExistence type="inferred from homology"/>
<sequence length="272" mass="29816">MRMALGISYNGQAYCGWQSQPSVRTVQDALEAALGRFATHPVSTLCAGRTDAGVHGLMQVVHFDTPLDRPAASWVRGTNGFLPADIAVQWAQAVPDSFHARASALARRYAYVLLQSPVRPSVESGRVGWVCHRLDHDAMQQAADYLVGEHDFSAFRASTCQAPSPVKTLRRIGISCRGQSPPHPALGWSPCYWRFEFVANAFLHHMIRNIMGCLVAIGQGKQSPQWMQQLLRARSRAAAAPTFAPDGLYFLGPVYAAGWGLPERTVAFDGWP</sequence>
<accession>A1WSF3</accession>
<dbReference type="EC" id="5.4.99.12" evidence="1"/>
<dbReference type="EMBL" id="CP000542">
    <property type="protein sequence ID" value="ABM60560.1"/>
    <property type="molecule type" value="Genomic_DNA"/>
</dbReference>
<dbReference type="RefSeq" id="WP_011812538.1">
    <property type="nucleotide sequence ID" value="NC_008786.1"/>
</dbReference>
<dbReference type="SMR" id="A1WSF3"/>
<dbReference type="STRING" id="391735.Veis_4870"/>
<dbReference type="GeneID" id="76463133"/>
<dbReference type="KEGG" id="vei:Veis_4870"/>
<dbReference type="eggNOG" id="COG0101">
    <property type="taxonomic scope" value="Bacteria"/>
</dbReference>
<dbReference type="HOGENOM" id="CLU_014673_0_2_4"/>
<dbReference type="OrthoDB" id="9811823at2"/>
<dbReference type="Proteomes" id="UP000000374">
    <property type="component" value="Chromosome"/>
</dbReference>
<dbReference type="GO" id="GO:0003723">
    <property type="term" value="F:RNA binding"/>
    <property type="evidence" value="ECO:0007669"/>
    <property type="project" value="InterPro"/>
</dbReference>
<dbReference type="GO" id="GO:0160147">
    <property type="term" value="F:tRNA pseudouridine(38-40) synthase activity"/>
    <property type="evidence" value="ECO:0007669"/>
    <property type="project" value="UniProtKB-EC"/>
</dbReference>
<dbReference type="GO" id="GO:0031119">
    <property type="term" value="P:tRNA pseudouridine synthesis"/>
    <property type="evidence" value="ECO:0007669"/>
    <property type="project" value="UniProtKB-UniRule"/>
</dbReference>
<dbReference type="CDD" id="cd02570">
    <property type="entry name" value="PseudoU_synth_EcTruA"/>
    <property type="match status" value="1"/>
</dbReference>
<dbReference type="FunFam" id="3.30.70.580:FF:000001">
    <property type="entry name" value="tRNA pseudouridine synthase A"/>
    <property type="match status" value="1"/>
</dbReference>
<dbReference type="Gene3D" id="3.30.70.660">
    <property type="entry name" value="Pseudouridine synthase I, catalytic domain, C-terminal subdomain"/>
    <property type="match status" value="1"/>
</dbReference>
<dbReference type="Gene3D" id="3.30.70.580">
    <property type="entry name" value="Pseudouridine synthase I, catalytic domain, N-terminal subdomain"/>
    <property type="match status" value="1"/>
</dbReference>
<dbReference type="HAMAP" id="MF_00171">
    <property type="entry name" value="TruA"/>
    <property type="match status" value="1"/>
</dbReference>
<dbReference type="InterPro" id="IPR020103">
    <property type="entry name" value="PsdUridine_synth_cat_dom_sf"/>
</dbReference>
<dbReference type="InterPro" id="IPR001406">
    <property type="entry name" value="PsdUridine_synth_TruA"/>
</dbReference>
<dbReference type="InterPro" id="IPR020097">
    <property type="entry name" value="PsdUridine_synth_TruA_a/b_dom"/>
</dbReference>
<dbReference type="InterPro" id="IPR020095">
    <property type="entry name" value="PsdUridine_synth_TruA_C"/>
</dbReference>
<dbReference type="InterPro" id="IPR020094">
    <property type="entry name" value="TruA/RsuA/RluB/E/F_N"/>
</dbReference>
<dbReference type="NCBIfam" id="TIGR00071">
    <property type="entry name" value="hisT_truA"/>
    <property type="match status" value="1"/>
</dbReference>
<dbReference type="PANTHER" id="PTHR11142">
    <property type="entry name" value="PSEUDOURIDYLATE SYNTHASE"/>
    <property type="match status" value="1"/>
</dbReference>
<dbReference type="PANTHER" id="PTHR11142:SF0">
    <property type="entry name" value="TRNA PSEUDOURIDINE SYNTHASE-LIKE 1"/>
    <property type="match status" value="1"/>
</dbReference>
<dbReference type="Pfam" id="PF01416">
    <property type="entry name" value="PseudoU_synth_1"/>
    <property type="match status" value="2"/>
</dbReference>
<dbReference type="PIRSF" id="PIRSF001430">
    <property type="entry name" value="tRNA_psdUrid_synth"/>
    <property type="match status" value="1"/>
</dbReference>
<dbReference type="SUPFAM" id="SSF55120">
    <property type="entry name" value="Pseudouridine synthase"/>
    <property type="match status" value="1"/>
</dbReference>
<protein>
    <recommendedName>
        <fullName evidence="1">tRNA pseudouridine synthase A</fullName>
        <ecNumber evidence="1">5.4.99.12</ecNumber>
    </recommendedName>
    <alternativeName>
        <fullName evidence="1">tRNA pseudouridine(38-40) synthase</fullName>
    </alternativeName>
    <alternativeName>
        <fullName evidence="1">tRNA pseudouridylate synthase I</fullName>
    </alternativeName>
    <alternativeName>
        <fullName evidence="1">tRNA-uridine isomerase I</fullName>
    </alternativeName>
</protein>
<feature type="chain" id="PRO_1000017209" description="tRNA pseudouridine synthase A">
    <location>
        <begin position="1"/>
        <end position="272"/>
    </location>
</feature>
<feature type="active site" description="Nucleophile" evidence="1">
    <location>
        <position position="51"/>
    </location>
</feature>
<feature type="binding site" evidence="1">
    <location>
        <position position="109"/>
    </location>
    <ligand>
        <name>substrate</name>
    </ligand>
</feature>
<name>TRUA_VEREI</name>
<keyword id="KW-0413">Isomerase</keyword>
<keyword id="KW-1185">Reference proteome</keyword>
<keyword id="KW-0819">tRNA processing</keyword>
<gene>
    <name evidence="1" type="primary">truA</name>
    <name type="ordered locus">Veis_4870</name>
</gene>
<reference key="1">
    <citation type="submission" date="2006-12" db="EMBL/GenBank/DDBJ databases">
        <title>Complete sequence of chromosome 1 of Verminephrobacter eiseniae EF01-2.</title>
        <authorList>
            <person name="Copeland A."/>
            <person name="Lucas S."/>
            <person name="Lapidus A."/>
            <person name="Barry K."/>
            <person name="Detter J.C."/>
            <person name="Glavina del Rio T."/>
            <person name="Dalin E."/>
            <person name="Tice H."/>
            <person name="Pitluck S."/>
            <person name="Chertkov O."/>
            <person name="Brettin T."/>
            <person name="Bruce D."/>
            <person name="Han C."/>
            <person name="Tapia R."/>
            <person name="Gilna P."/>
            <person name="Schmutz J."/>
            <person name="Larimer F."/>
            <person name="Land M."/>
            <person name="Hauser L."/>
            <person name="Kyrpides N."/>
            <person name="Kim E."/>
            <person name="Stahl D."/>
            <person name="Richardson P."/>
        </authorList>
    </citation>
    <scope>NUCLEOTIDE SEQUENCE [LARGE SCALE GENOMIC DNA]</scope>
    <source>
        <strain>EF01-2</strain>
    </source>
</reference>
<organism>
    <name type="scientific">Verminephrobacter eiseniae (strain EF01-2)</name>
    <dbReference type="NCBI Taxonomy" id="391735"/>
    <lineage>
        <taxon>Bacteria</taxon>
        <taxon>Pseudomonadati</taxon>
        <taxon>Pseudomonadota</taxon>
        <taxon>Betaproteobacteria</taxon>
        <taxon>Burkholderiales</taxon>
        <taxon>Comamonadaceae</taxon>
        <taxon>Verminephrobacter</taxon>
    </lineage>
</organism>